<gene>
    <name evidence="1" type="primary">rsmB</name>
    <name evidence="1" type="synonym">sun</name>
    <name type="ordered locus">ECA4001</name>
</gene>
<name>RSMB_PECAS</name>
<dbReference type="EC" id="2.1.1.176" evidence="1"/>
<dbReference type="EMBL" id="BX950851">
    <property type="protein sequence ID" value="CAG76898.1"/>
    <property type="molecule type" value="Genomic_DNA"/>
</dbReference>
<dbReference type="RefSeq" id="WP_011095495.1">
    <property type="nucleotide sequence ID" value="NC_004547.2"/>
</dbReference>
<dbReference type="SMR" id="Q6D000"/>
<dbReference type="STRING" id="218491.ECA4001"/>
<dbReference type="GeneID" id="57210665"/>
<dbReference type="KEGG" id="eca:ECA4001"/>
<dbReference type="PATRIC" id="fig|218491.5.peg.4067"/>
<dbReference type="eggNOG" id="COG0144">
    <property type="taxonomic scope" value="Bacteria"/>
</dbReference>
<dbReference type="eggNOG" id="COG0781">
    <property type="taxonomic scope" value="Bacteria"/>
</dbReference>
<dbReference type="HOGENOM" id="CLU_005316_0_4_6"/>
<dbReference type="OrthoDB" id="9810297at2"/>
<dbReference type="PHI-base" id="PHI:2694"/>
<dbReference type="Proteomes" id="UP000007966">
    <property type="component" value="Chromosome"/>
</dbReference>
<dbReference type="GO" id="GO:0005829">
    <property type="term" value="C:cytosol"/>
    <property type="evidence" value="ECO:0007669"/>
    <property type="project" value="TreeGrafter"/>
</dbReference>
<dbReference type="GO" id="GO:0003723">
    <property type="term" value="F:RNA binding"/>
    <property type="evidence" value="ECO:0007669"/>
    <property type="project" value="UniProtKB-KW"/>
</dbReference>
<dbReference type="GO" id="GO:0009383">
    <property type="term" value="F:rRNA (cytosine-C5-)-methyltransferase activity"/>
    <property type="evidence" value="ECO:0007669"/>
    <property type="project" value="TreeGrafter"/>
</dbReference>
<dbReference type="GO" id="GO:0006355">
    <property type="term" value="P:regulation of DNA-templated transcription"/>
    <property type="evidence" value="ECO:0007669"/>
    <property type="project" value="InterPro"/>
</dbReference>
<dbReference type="GO" id="GO:0070475">
    <property type="term" value="P:rRNA base methylation"/>
    <property type="evidence" value="ECO:0007669"/>
    <property type="project" value="TreeGrafter"/>
</dbReference>
<dbReference type="CDD" id="cd02440">
    <property type="entry name" value="AdoMet_MTases"/>
    <property type="match status" value="1"/>
</dbReference>
<dbReference type="CDD" id="cd00620">
    <property type="entry name" value="Methyltransferase_Sun"/>
    <property type="match status" value="1"/>
</dbReference>
<dbReference type="FunFam" id="1.10.940.10:FF:000002">
    <property type="entry name" value="Ribosomal RNA small subunit methyltransferase B"/>
    <property type="match status" value="1"/>
</dbReference>
<dbReference type="FunFam" id="3.30.70.1170:FF:000002">
    <property type="entry name" value="Ribosomal RNA small subunit methyltransferase B"/>
    <property type="match status" value="1"/>
</dbReference>
<dbReference type="FunFam" id="3.40.50.150:FF:000022">
    <property type="entry name" value="Ribosomal RNA small subunit methyltransferase B"/>
    <property type="match status" value="1"/>
</dbReference>
<dbReference type="Gene3D" id="1.10.287.730">
    <property type="entry name" value="Helix hairpin bin"/>
    <property type="match status" value="1"/>
</dbReference>
<dbReference type="Gene3D" id="1.10.940.10">
    <property type="entry name" value="NusB-like"/>
    <property type="match status" value="1"/>
</dbReference>
<dbReference type="Gene3D" id="3.30.70.1170">
    <property type="entry name" value="Sun protein, domain 3"/>
    <property type="match status" value="1"/>
</dbReference>
<dbReference type="Gene3D" id="3.40.50.150">
    <property type="entry name" value="Vaccinia Virus protein VP39"/>
    <property type="match status" value="1"/>
</dbReference>
<dbReference type="HAMAP" id="MF_01856">
    <property type="entry name" value="16SrRNA_methyltr_B"/>
    <property type="match status" value="1"/>
</dbReference>
<dbReference type="InterPro" id="IPR049560">
    <property type="entry name" value="MeTrfase_RsmB-F_NOP2_cat"/>
</dbReference>
<dbReference type="InterPro" id="IPR001678">
    <property type="entry name" value="MeTrfase_RsmB-F_NOP2_dom"/>
</dbReference>
<dbReference type="InterPro" id="IPR035926">
    <property type="entry name" value="NusB-like_sf"/>
</dbReference>
<dbReference type="InterPro" id="IPR006027">
    <property type="entry name" value="NusB_RsmB_TIM44"/>
</dbReference>
<dbReference type="InterPro" id="IPR023267">
    <property type="entry name" value="RCMT"/>
</dbReference>
<dbReference type="InterPro" id="IPR004573">
    <property type="entry name" value="rRNA_ssu_MeTfrase_B"/>
</dbReference>
<dbReference type="InterPro" id="IPR023541">
    <property type="entry name" value="rRNA_ssu_MeTfrase_B_ent"/>
</dbReference>
<dbReference type="InterPro" id="IPR054728">
    <property type="entry name" value="RsmB-like_ferredoxin"/>
</dbReference>
<dbReference type="InterPro" id="IPR048019">
    <property type="entry name" value="RsmB-like_N"/>
</dbReference>
<dbReference type="InterPro" id="IPR018314">
    <property type="entry name" value="RsmB/NOL1/NOP2-like_CS"/>
</dbReference>
<dbReference type="InterPro" id="IPR029063">
    <property type="entry name" value="SAM-dependent_MTases_sf"/>
</dbReference>
<dbReference type="NCBIfam" id="NF008149">
    <property type="entry name" value="PRK10901.1"/>
    <property type="match status" value="1"/>
</dbReference>
<dbReference type="NCBIfam" id="NF011494">
    <property type="entry name" value="PRK14902.1"/>
    <property type="match status" value="1"/>
</dbReference>
<dbReference type="NCBIfam" id="TIGR00563">
    <property type="entry name" value="rsmB"/>
    <property type="match status" value="1"/>
</dbReference>
<dbReference type="PANTHER" id="PTHR22807:SF61">
    <property type="entry name" value="NOL1_NOP2_SUN FAMILY PROTEIN _ ANTITERMINATION NUSB DOMAIN-CONTAINING PROTEIN"/>
    <property type="match status" value="1"/>
</dbReference>
<dbReference type="PANTHER" id="PTHR22807">
    <property type="entry name" value="NOP2 YEAST -RELATED NOL1/NOP2/FMU SUN DOMAIN-CONTAINING"/>
    <property type="match status" value="1"/>
</dbReference>
<dbReference type="Pfam" id="PF01189">
    <property type="entry name" value="Methyltr_RsmB-F"/>
    <property type="match status" value="1"/>
</dbReference>
<dbReference type="Pfam" id="PF01029">
    <property type="entry name" value="NusB"/>
    <property type="match status" value="1"/>
</dbReference>
<dbReference type="Pfam" id="PF22458">
    <property type="entry name" value="RsmF-B_ferredox"/>
    <property type="match status" value="1"/>
</dbReference>
<dbReference type="PRINTS" id="PR02008">
    <property type="entry name" value="RCMTFAMILY"/>
</dbReference>
<dbReference type="SUPFAM" id="SSF48013">
    <property type="entry name" value="NusB-like"/>
    <property type="match status" value="1"/>
</dbReference>
<dbReference type="SUPFAM" id="SSF53335">
    <property type="entry name" value="S-adenosyl-L-methionine-dependent methyltransferases"/>
    <property type="match status" value="1"/>
</dbReference>
<dbReference type="PROSITE" id="PS01153">
    <property type="entry name" value="NOL1_NOP2_SUN"/>
    <property type="match status" value="1"/>
</dbReference>
<dbReference type="PROSITE" id="PS51686">
    <property type="entry name" value="SAM_MT_RSMB_NOP"/>
    <property type="match status" value="1"/>
</dbReference>
<keyword id="KW-0963">Cytoplasm</keyword>
<keyword id="KW-0489">Methyltransferase</keyword>
<keyword id="KW-1185">Reference proteome</keyword>
<keyword id="KW-0694">RNA-binding</keyword>
<keyword id="KW-0698">rRNA processing</keyword>
<keyword id="KW-0949">S-adenosyl-L-methionine</keyword>
<keyword id="KW-0808">Transferase</keyword>
<sequence length="429" mass="48236">MKSSYNLRSIAAKVVGQVLDQGQSLSALLPIHQRDVSDKDRALLQELCFGVLRVLPQLEWCIQQLMAKPLTGKQRTLHYLIMVGIYQLHYTRIPPHAALAETVEGAVALKRPQLKGLINGVLRQFQRQQEELLQREATHSSHYLHPSWLLARIEHAYPNNWRGIVEANNQRPPMWLRVNRLHHTREAYLNLLMQGGIEAFPHTEYSDAIRLASPCAVDQLPGFSQGWATVQDASAQGCVYWLDPQDGEQILDLCAAPGGKTTHILEAAPKSHVLAVDVDETRLGRVKENLLRLQMHAEVKQGDGRYPDSWCEARVFDRILLDAPCSATGVIRRHPDIKWLRRDRDIEELVALQKEILDAIWPHLKTGGTMVYATCSILPQENTQQVTGFLSRHADAALVDTGTSEIPGIQILPHADSGDGFFYAKLVKN</sequence>
<accession>Q6D000</accession>
<proteinExistence type="inferred from homology"/>
<organism>
    <name type="scientific">Pectobacterium atrosepticum (strain SCRI 1043 / ATCC BAA-672)</name>
    <name type="common">Erwinia carotovora subsp. atroseptica</name>
    <dbReference type="NCBI Taxonomy" id="218491"/>
    <lineage>
        <taxon>Bacteria</taxon>
        <taxon>Pseudomonadati</taxon>
        <taxon>Pseudomonadota</taxon>
        <taxon>Gammaproteobacteria</taxon>
        <taxon>Enterobacterales</taxon>
        <taxon>Pectobacteriaceae</taxon>
        <taxon>Pectobacterium</taxon>
    </lineage>
</organism>
<evidence type="ECO:0000255" key="1">
    <source>
        <dbReference type="HAMAP-Rule" id="MF_01856"/>
    </source>
</evidence>
<comment type="function">
    <text evidence="1">Specifically methylates the cytosine at position 967 (m5C967) of 16S rRNA.</text>
</comment>
<comment type="catalytic activity">
    <reaction evidence="1">
        <text>cytidine(967) in 16S rRNA + S-adenosyl-L-methionine = 5-methylcytidine(967) in 16S rRNA + S-adenosyl-L-homocysteine + H(+)</text>
        <dbReference type="Rhea" id="RHEA:42748"/>
        <dbReference type="Rhea" id="RHEA-COMP:10219"/>
        <dbReference type="Rhea" id="RHEA-COMP:10220"/>
        <dbReference type="ChEBI" id="CHEBI:15378"/>
        <dbReference type="ChEBI" id="CHEBI:57856"/>
        <dbReference type="ChEBI" id="CHEBI:59789"/>
        <dbReference type="ChEBI" id="CHEBI:74483"/>
        <dbReference type="ChEBI" id="CHEBI:82748"/>
        <dbReference type="EC" id="2.1.1.176"/>
    </reaction>
</comment>
<comment type="subcellular location">
    <subcellularLocation>
        <location evidence="1">Cytoplasm</location>
    </subcellularLocation>
</comment>
<comment type="similarity">
    <text evidence="1">Belongs to the class I-like SAM-binding methyltransferase superfamily. RsmB/NOP family.</text>
</comment>
<protein>
    <recommendedName>
        <fullName evidence="1">Ribosomal RNA small subunit methyltransferase B</fullName>
        <ecNumber evidence="1">2.1.1.176</ecNumber>
    </recommendedName>
    <alternativeName>
        <fullName evidence="1">16S rRNA m5C967 methyltransferase</fullName>
    </alternativeName>
    <alternativeName>
        <fullName evidence="1">rRNA (cytosine-C(5)-)-methyltransferase RsmB</fullName>
    </alternativeName>
</protein>
<feature type="chain" id="PRO_0000366149" description="Ribosomal RNA small subunit methyltransferase B">
    <location>
        <begin position="1"/>
        <end position="429"/>
    </location>
</feature>
<feature type="active site" description="Nucleophile" evidence="1">
    <location>
        <position position="375"/>
    </location>
</feature>
<feature type="binding site" evidence="1">
    <location>
        <begin position="254"/>
        <end position="260"/>
    </location>
    <ligand>
        <name>S-adenosyl-L-methionine</name>
        <dbReference type="ChEBI" id="CHEBI:59789"/>
    </ligand>
</feature>
<feature type="binding site" evidence="1">
    <location>
        <position position="277"/>
    </location>
    <ligand>
        <name>S-adenosyl-L-methionine</name>
        <dbReference type="ChEBI" id="CHEBI:59789"/>
    </ligand>
</feature>
<feature type="binding site" evidence="1">
    <location>
        <position position="303"/>
    </location>
    <ligand>
        <name>S-adenosyl-L-methionine</name>
        <dbReference type="ChEBI" id="CHEBI:59789"/>
    </ligand>
</feature>
<feature type="binding site" evidence="1">
    <location>
        <position position="322"/>
    </location>
    <ligand>
        <name>S-adenosyl-L-methionine</name>
        <dbReference type="ChEBI" id="CHEBI:59789"/>
    </ligand>
</feature>
<reference key="1">
    <citation type="journal article" date="2004" name="Proc. Natl. Acad. Sci. U.S.A.">
        <title>Genome sequence of the enterobacterial phytopathogen Erwinia carotovora subsp. atroseptica and characterization of virulence factors.</title>
        <authorList>
            <person name="Bell K.S."/>
            <person name="Sebaihia M."/>
            <person name="Pritchard L."/>
            <person name="Holden M.T.G."/>
            <person name="Hyman L.J."/>
            <person name="Holeva M.C."/>
            <person name="Thomson N.R."/>
            <person name="Bentley S.D."/>
            <person name="Churcher L.J.C."/>
            <person name="Mungall K."/>
            <person name="Atkin R."/>
            <person name="Bason N."/>
            <person name="Brooks K."/>
            <person name="Chillingworth T."/>
            <person name="Clark K."/>
            <person name="Doggett J."/>
            <person name="Fraser A."/>
            <person name="Hance Z."/>
            <person name="Hauser H."/>
            <person name="Jagels K."/>
            <person name="Moule S."/>
            <person name="Norbertczak H."/>
            <person name="Ormond D."/>
            <person name="Price C."/>
            <person name="Quail M.A."/>
            <person name="Sanders M."/>
            <person name="Walker D."/>
            <person name="Whitehead S."/>
            <person name="Salmond G.P.C."/>
            <person name="Birch P.R.J."/>
            <person name="Parkhill J."/>
            <person name="Toth I.K."/>
        </authorList>
    </citation>
    <scope>NUCLEOTIDE SEQUENCE [LARGE SCALE GENOMIC DNA]</scope>
    <source>
        <strain>SCRI 1043 / ATCC BAA-672</strain>
    </source>
</reference>